<proteinExistence type="inferred from homology"/>
<protein>
    <recommendedName>
        <fullName>Uncharacterized protein L183</fullName>
    </recommendedName>
</protein>
<sequence length="386" mass="45834">MCDFVFCYGSSNERKLSMNIKETKKGLQLYVSNSEYIYIEIKKTYRKNLVINFEDSLKFMKFLVRKKIHCQFLTDKHGCGFCKNYREYFQYIVQNKHMKHIKFFVGKFIPMIRSRCGYSEFNLSNVVEDNKIFENNNIDLEIVKYMFEIGNLFDVDYIVVHVLTELDDIEIDFIDSLIDIYKQKITYLFTEDFSDIDNLLYTVLDLNIFITPALKTDDINLFNYVVEELSSIMSDIKEEELSKKQIIPFKKIKSKYILDADRIFKLIDICVGSFYEKSFHCPNIFKQLVEDYIENHGSIRLLFNNFFRKIVANDKFAYAGILCEKVNSDQNFLRKILFESVGSIKEAQILIDYGLDHEEIYEDPDFRKLPKTITKFIKKLIKETSN</sequence>
<dbReference type="EMBL" id="AY653733">
    <property type="protein sequence ID" value="AAV50457.1"/>
    <property type="status" value="ALT_INIT"/>
    <property type="molecule type" value="Genomic_DNA"/>
</dbReference>
<dbReference type="KEGG" id="vg:9924785"/>
<dbReference type="Proteomes" id="UP000001134">
    <property type="component" value="Genome"/>
</dbReference>
<organism>
    <name type="scientific">Acanthamoeba polyphaga mimivirus</name>
    <name type="common">APMV</name>
    <dbReference type="NCBI Taxonomy" id="212035"/>
    <lineage>
        <taxon>Viruses</taxon>
        <taxon>Varidnaviria</taxon>
        <taxon>Bamfordvirae</taxon>
        <taxon>Nucleocytoviricota</taxon>
        <taxon>Megaviricetes</taxon>
        <taxon>Imitervirales</taxon>
        <taxon>Mimiviridae</taxon>
        <taxon>Megamimivirinae</taxon>
        <taxon>Mimivirus</taxon>
        <taxon>Mimivirus bradfordmassiliense</taxon>
    </lineage>
</organism>
<comment type="similarity">
    <text evidence="1">Belongs to the mimivirus L17x/L18x family.</text>
</comment>
<comment type="sequence caution" evidence="1">
    <conflict type="erroneous initiation">
        <sequence resource="EMBL-CDS" id="AAV50457"/>
    </conflict>
</comment>
<gene>
    <name type="ordered locus">MIMI_L183</name>
</gene>
<organismHost>
    <name type="scientific">Acanthamoeba polyphaga</name>
    <name type="common">Amoeba</name>
    <dbReference type="NCBI Taxonomy" id="5757"/>
</organismHost>
<feature type="chain" id="PRO_0000071239" description="Uncharacterized protein L183">
    <location>
        <begin position="1"/>
        <end position="386"/>
    </location>
</feature>
<evidence type="ECO:0000305" key="1"/>
<accession>Q5UPP3</accession>
<reference key="1">
    <citation type="journal article" date="2004" name="Science">
        <title>The 1.2-megabase genome sequence of Mimivirus.</title>
        <authorList>
            <person name="Raoult D."/>
            <person name="Audic S."/>
            <person name="Robert C."/>
            <person name="Abergel C."/>
            <person name="Renesto P."/>
            <person name="Ogata H."/>
            <person name="La Scola B."/>
            <person name="Susan M."/>
            <person name="Claverie J.-M."/>
        </authorList>
    </citation>
    <scope>NUCLEOTIDE SEQUENCE [LARGE SCALE GENOMIC DNA]</scope>
    <source>
        <strain>Rowbotham-Bradford</strain>
    </source>
</reference>
<keyword id="KW-1185">Reference proteome</keyword>
<name>YL183_MIMIV</name>